<name>CAP9_ADECT</name>
<organismHost>
    <name type="scientific">Canis lupus familiaris</name>
    <name type="common">Dog</name>
    <name type="synonym">Canis familiaris</name>
    <dbReference type="NCBI Taxonomy" id="9615"/>
</organismHost>
<comment type="function">
    <text evidence="1">Structural component of the virion that acts as a cement protein on the capsid exterior and forms triskelion structures consisting of three molecules that stabilize three hexon trimers at the center of each icosahedral facet and fixes the peripentonal hexons. Dispensable for assembly. During virus entry, recruits the anterograde motor kinesin-1 to the capsid docked at the nuclear pore complex thereby subjecting the docked capsid to a pulling force. The resulting tension leads to capsid disruption, dispersion of capsid fragments toward cell periphery and eventually viral DNA entry into the host nucleus.</text>
</comment>
<comment type="subunit">
    <text evidence="1">Homotrimer. Interacts with hexon protein; this interaction tethers the hexons together. Self-interacts with adjacent proteins. Interacts with kinesin light chain KLC1; this interaction leads to capsid disruption at the nuclear pore complex during virus entry into host cell.</text>
</comment>
<comment type="subcellular location">
    <subcellularLocation>
        <location evidence="1">Virion</location>
    </subcellularLocation>
    <subcellularLocation>
        <location evidence="1">Host nucleus</location>
    </subcellularLocation>
    <text evidence="1">Located in the canyons between the hexons on the outer surface of the capsid. Forms a sort of hairnet on the outer side of the virion. Present in 240 copies per virion.</text>
</comment>
<comment type="induction">
    <text evidence="1">Expressed in the intermediate phase of the viral replicative cycle.</text>
</comment>
<comment type="domain">
    <text evidence="1">Three N-terminal domains of hexon-interlacing protein form triskelions between hexon capsomers.</text>
</comment>
<comment type="miscellaneous">
    <text evidence="1">This protein is only encoded by mastadenoviruses, and may therefore play a role in mammals tropism.</text>
</comment>
<comment type="similarity">
    <text evidence="1 2">Belongs to the adenoviridae hexon-interlacing protein family.</text>
</comment>
<dbReference type="EMBL" id="J04368">
    <property type="protein sequence ID" value="AAA42473.1"/>
    <property type="molecule type" value="Genomic_DNA"/>
</dbReference>
<dbReference type="EMBL" id="U77082">
    <property type="protein sequence ID" value="AAB38714.1"/>
    <property type="molecule type" value="Genomic_DNA"/>
</dbReference>
<dbReference type="PIR" id="D34165">
    <property type="entry name" value="SXADC2"/>
</dbReference>
<dbReference type="RefSeq" id="AP_000611.1">
    <property type="nucleotide sequence ID" value="AC_000020.1"/>
</dbReference>
<dbReference type="SMR" id="P14268"/>
<dbReference type="Proteomes" id="UP000118097">
    <property type="component" value="Segment"/>
</dbReference>
<dbReference type="GO" id="GO:0042025">
    <property type="term" value="C:host cell nucleus"/>
    <property type="evidence" value="ECO:0007669"/>
    <property type="project" value="UniProtKB-SubCell"/>
</dbReference>
<dbReference type="GO" id="GO:0098021">
    <property type="term" value="C:viral capsid, decoration"/>
    <property type="evidence" value="ECO:0007669"/>
    <property type="project" value="UniProtKB-UniRule"/>
</dbReference>
<dbReference type="GO" id="GO:0031423">
    <property type="term" value="F:hexon binding"/>
    <property type="evidence" value="ECO:0007669"/>
    <property type="project" value="InterPro"/>
</dbReference>
<dbReference type="GO" id="GO:0046718">
    <property type="term" value="P:symbiont entry into host cell"/>
    <property type="evidence" value="ECO:0007669"/>
    <property type="project" value="UniProtKB-UniRule"/>
</dbReference>
<dbReference type="HAMAP" id="MF_04050">
    <property type="entry name" value="ADV_CAP9"/>
    <property type="match status" value="1"/>
</dbReference>
<dbReference type="InterPro" id="IPR005641">
    <property type="entry name" value="Hexon_assoc_IX"/>
</dbReference>
<dbReference type="Pfam" id="PF03955">
    <property type="entry name" value="Adeno_PIX"/>
    <property type="match status" value="1"/>
</dbReference>
<organism>
    <name type="scientific">Canine adenovirus serotype 2 (strain Toronto A 26-61)</name>
    <name type="common">CAdV-2</name>
    <name type="synonym">Canine adenovirus 2 (strain Toronto A 26-61)</name>
    <dbReference type="NCBI Taxonomy" id="69152"/>
    <lineage>
        <taxon>Viruses</taxon>
        <taxon>Varidnaviria</taxon>
        <taxon>Bamfordvirae</taxon>
        <taxon>Preplasmiviricota</taxon>
        <taxon>Tectiliviricetes</taxon>
        <taxon>Rowavirales</taxon>
        <taxon>Adenoviridae</taxon>
        <taxon>Mastadenovirus</taxon>
        <taxon>Canine mastadenovirus A</taxon>
    </lineage>
</organism>
<proteinExistence type="inferred from homology"/>
<feature type="chain" id="PRO_0000221853" description="Hexon-interlacing protein" evidence="1">
    <location>
        <begin position="1"/>
        <end position="103"/>
    </location>
</feature>
<feature type="coiled-coil region" evidence="1">
    <location>
        <begin position="72"/>
        <end position="99"/>
    </location>
</feature>
<gene>
    <name evidence="1" type="primary">IX</name>
</gene>
<keyword id="KW-1232">Capsid decoration protein</keyword>
<keyword id="KW-0167">Capsid protein</keyword>
<keyword id="KW-0175">Coiled coil</keyword>
<keyword id="KW-1048">Host nucleus</keyword>
<keyword id="KW-0945">Host-virus interaction</keyword>
<keyword id="KW-1185">Reference proteome</keyword>
<keyword id="KW-0946">Virion</keyword>
<keyword id="KW-1160">Virus entry into host cell</keyword>
<reference key="1">
    <citation type="journal article" date="1989" name="Virology">
        <title>Nucleotide sequence of E1 region of canine adenovirus type 2.</title>
        <authorList>
            <person name="Shibata R."/>
            <person name="Shinagawa M."/>
            <person name="Iida Y."/>
            <person name="Tsukiyama T."/>
        </authorList>
    </citation>
    <scope>NUCLEOTIDE SEQUENCE [GENOMIC DNA]</scope>
</reference>
<reference key="2">
    <citation type="submission" date="1996-12" db="EMBL/GenBank/DDBJ databases">
        <title>Complete DNA sequence and genomic organization of canine adenovirus type 2.</title>
        <authorList>
            <person name="Campbell J.B."/>
            <person name="Zhao Y."/>
        </authorList>
    </citation>
    <scope>NUCLEOTIDE SEQUENCE [LARGE SCALE GENOMIC DNA]</scope>
</reference>
<sequence length="103" mass="11428">MDPQQKGLVNTCFVTTRIPSWAGARQNVTGSDLEGKPVPSDVLESGRPLAAPRIRTLYEEQQLNMLAVNVLLDELKIQVAAMQNSVTAIQREVNDLKQRIARD</sequence>
<evidence type="ECO:0000255" key="1">
    <source>
        <dbReference type="HAMAP-Rule" id="MF_04050"/>
    </source>
</evidence>
<evidence type="ECO:0000305" key="2"/>
<accession>P14268</accession>
<protein>
    <recommendedName>
        <fullName evidence="1">Hexon-interlacing protein</fullName>
    </recommendedName>
    <alternativeName>
        <fullName evidence="1">Protein IX</fullName>
    </alternativeName>
</protein>